<proteinExistence type="evidence at protein level"/>
<accession>B0R474</accession>
<sequence>MALGTYVPTAIRTSLLRKAAVVIVTIMLVLVGVGVFTTQAVSTQVTEQRDTELLTSTEQEAEALEEWIGRQRSATQYLSQDNAIQSAPQADKSEVLSTRISGLTETAAALHYVNLSTDTIRASTDAAVEGDTYTSYSIPWRGEGLSFYGGGDVITSSVFNYRGTPVMAFASKQPGSDNAVFVFHSVETRGEAFSRNIDGSYTQVVDIEGTVQIAADESAISSAYGAGRDAPVIATGLTTNSGIETRDGLLVGHAKVEGTDWVLLKHAPTSNAYALEGDVQRNIVVLIVTAVAGLGALVLVIGRDALTALTDMSDRAEAIAAGDIDTAIEETTRIDEVGDLRRSFRDIQEYLQTVAGQADALAEQDFDADALDKSVPGRLGESLETMHWDLETAIADLEDAQETAEQSRKEAEQSREEAEALAAALESQAQDIRETVEHAADGDLTQRLETDTDHESMAAIATALNSLLEELEGTIHRIQRFSKDVAESSDHITTSAEEVKRASGQVSESVQEMSADARQQNGIVQDVSDEMTDLSATIEEIASSSDEVAAKSNDAVSVGQSGRARSQDAIEEMNAVDEQAKRTIAEMEALDDEMTEIGEIVTLIDDIAEQTSMLALNASIEAARAGEAGEGFAVVADEIKSLSKETTEATQEIESLIADVQDSTTDAVTDMQEMGDRLSEGKSTVTDTVETIDTIVERIEEANGGVQTINTATDEQATTTEEVVTMVDEVGSISDDTTARAEDAAAAAEEQTASLTEVTNRIQDLSDQSTDLYELLSDFTVREDHAVADGGAENTTGAFVRSASTDHSRDATHHDT</sequence>
<comment type="function">
    <text evidence="1">Potentially involved in chemo- or phototactic signal transduction.</text>
</comment>
<comment type="subcellular location">
    <subcellularLocation>
        <location evidence="7">Cell membrane</location>
        <topology evidence="7">Multi-pass membrane protein</topology>
    </subcellularLocation>
</comment>
<comment type="PTM">
    <text evidence="6">Methylated by CheR.</text>
</comment>
<comment type="similarity">
    <text evidence="7">Belongs to the methyl-accepting chemotaxis (MCP) protein family.</text>
</comment>
<keyword id="KW-1003">Cell membrane</keyword>
<keyword id="KW-0145">Chemotaxis</keyword>
<keyword id="KW-0472">Membrane</keyword>
<keyword id="KW-0677">Repeat</keyword>
<keyword id="KW-0807">Transducer</keyword>
<keyword id="KW-0812">Transmembrane</keyword>
<keyword id="KW-1133">Transmembrane helix</keyword>
<organism>
    <name type="scientific">Halobacterium salinarum (strain ATCC 29341 / DSM 671 / R1)</name>
    <dbReference type="NCBI Taxonomy" id="478009"/>
    <lineage>
        <taxon>Archaea</taxon>
        <taxon>Methanobacteriati</taxon>
        <taxon>Methanobacteriota</taxon>
        <taxon>Stenosarchaea group</taxon>
        <taxon>Halobacteria</taxon>
        <taxon>Halobacteriales</taxon>
        <taxon>Halobacteriaceae</taxon>
        <taxon>Halobacterium</taxon>
        <taxon>Halobacterium salinarum NRC-34001</taxon>
    </lineage>
</organism>
<name>HTR18_HALS3</name>
<protein>
    <recommendedName>
        <fullName>Transducer protein Htr18</fullName>
    </recommendedName>
</protein>
<evidence type="ECO:0000250" key="1"/>
<evidence type="ECO:0000255" key="2"/>
<evidence type="ECO:0000255" key="3">
    <source>
        <dbReference type="PROSITE-ProRule" id="PRU00102"/>
    </source>
</evidence>
<evidence type="ECO:0000255" key="4">
    <source>
        <dbReference type="PROSITE-ProRule" id="PRU00284"/>
    </source>
</evidence>
<evidence type="ECO:0000256" key="5">
    <source>
        <dbReference type="SAM" id="MobiDB-lite"/>
    </source>
</evidence>
<evidence type="ECO:0000269" key="6">
    <source>
    </source>
</evidence>
<evidence type="ECO:0000305" key="7"/>
<feature type="chain" id="PRO_0000429082" description="Transducer protein Htr18">
    <location>
        <begin position="1"/>
        <end position="816"/>
    </location>
</feature>
<feature type="transmembrane region" description="Helical" evidence="2">
    <location>
        <begin position="21"/>
        <end position="41"/>
    </location>
</feature>
<feature type="transmembrane region" description="Helical" evidence="2">
    <location>
        <begin position="282"/>
        <end position="302"/>
    </location>
</feature>
<feature type="domain" description="HAMP 1" evidence="3">
    <location>
        <begin position="303"/>
        <end position="356"/>
    </location>
</feature>
<feature type="domain" description="HAMP 2" evidence="3">
    <location>
        <begin position="423"/>
        <end position="476"/>
    </location>
</feature>
<feature type="domain" description="Methyl-accepting transducer" evidence="4">
    <location>
        <begin position="495"/>
        <end position="731"/>
    </location>
</feature>
<feature type="region of interest" description="Disordered" evidence="5">
    <location>
        <begin position="399"/>
        <end position="425"/>
    </location>
</feature>
<feature type="region of interest" description="Disordered" evidence="5">
    <location>
        <begin position="790"/>
        <end position="816"/>
    </location>
</feature>
<feature type="compositionally biased region" description="Basic and acidic residues" evidence="5">
    <location>
        <begin position="405"/>
        <end position="418"/>
    </location>
</feature>
<feature type="compositionally biased region" description="Polar residues" evidence="5">
    <location>
        <begin position="793"/>
        <end position="803"/>
    </location>
</feature>
<feature type="compositionally biased region" description="Basic and acidic residues" evidence="5">
    <location>
        <begin position="804"/>
        <end position="816"/>
    </location>
</feature>
<reference key="1">
    <citation type="journal article" date="2008" name="Genomics">
        <title>Evolution in the laboratory: the genome of Halobacterium salinarum strain R1 compared to that of strain NRC-1.</title>
        <authorList>
            <person name="Pfeiffer F."/>
            <person name="Schuster S.C."/>
            <person name="Broicher A."/>
            <person name="Falb M."/>
            <person name="Palm P."/>
            <person name="Rodewald K."/>
            <person name="Ruepp A."/>
            <person name="Soppa J."/>
            <person name="Tittor J."/>
            <person name="Oesterhelt D."/>
        </authorList>
    </citation>
    <scope>NUCLEOTIDE SEQUENCE [LARGE SCALE GENOMIC DNA]</scope>
    <source>
        <strain>ATCC 29341 / DSM 671 / R1</strain>
    </source>
</reference>
<reference key="2">
    <citation type="journal article" date="2008" name="J. Mol. Biol.">
        <title>Physiological sites of deamidation and methyl esterification in sensory transducers of Halobacterium salinarum.</title>
        <authorList>
            <person name="Koch M.K."/>
            <person name="Staudinger W.F."/>
            <person name="Siedler F."/>
            <person name="Oesterhelt D."/>
        </authorList>
    </citation>
    <scope>METHYLATION</scope>
    <source>
        <strain>R1 / S9</strain>
    </source>
</reference>
<gene>
    <name type="primary">htr18</name>
    <name type="ordered locus">OE_2195F</name>
</gene>
<dbReference type="EMBL" id="AM774415">
    <property type="protein sequence ID" value="CAP13539.1"/>
    <property type="molecule type" value="Genomic_DNA"/>
</dbReference>
<dbReference type="RefSeq" id="WP_012289229.1">
    <property type="nucleotide sequence ID" value="NC_010364.1"/>
</dbReference>
<dbReference type="SMR" id="B0R474"/>
<dbReference type="EnsemblBacteria" id="CAP13539">
    <property type="protein sequence ID" value="CAP13539"/>
    <property type="gene ID" value="OE_2195F"/>
</dbReference>
<dbReference type="GeneID" id="68693652"/>
<dbReference type="KEGG" id="hsl:OE_2195F"/>
<dbReference type="HOGENOM" id="CLU_000445_107_19_2"/>
<dbReference type="PhylomeDB" id="B0R474"/>
<dbReference type="Proteomes" id="UP000001321">
    <property type="component" value="Chromosome"/>
</dbReference>
<dbReference type="GO" id="GO:0005886">
    <property type="term" value="C:plasma membrane"/>
    <property type="evidence" value="ECO:0007669"/>
    <property type="project" value="UniProtKB-SubCell"/>
</dbReference>
<dbReference type="GO" id="GO:0004888">
    <property type="term" value="F:transmembrane signaling receptor activity"/>
    <property type="evidence" value="ECO:0007669"/>
    <property type="project" value="InterPro"/>
</dbReference>
<dbReference type="GO" id="GO:0006935">
    <property type="term" value="P:chemotaxis"/>
    <property type="evidence" value="ECO:0007669"/>
    <property type="project" value="UniProtKB-KW"/>
</dbReference>
<dbReference type="GO" id="GO:0007165">
    <property type="term" value="P:signal transduction"/>
    <property type="evidence" value="ECO:0007669"/>
    <property type="project" value="UniProtKB-KW"/>
</dbReference>
<dbReference type="CDD" id="cd06225">
    <property type="entry name" value="HAMP"/>
    <property type="match status" value="1"/>
</dbReference>
<dbReference type="CDD" id="cd11386">
    <property type="entry name" value="MCP_signal"/>
    <property type="match status" value="1"/>
</dbReference>
<dbReference type="Gene3D" id="6.10.250.1910">
    <property type="match status" value="1"/>
</dbReference>
<dbReference type="Gene3D" id="6.10.340.10">
    <property type="match status" value="1"/>
</dbReference>
<dbReference type="Gene3D" id="1.10.287.950">
    <property type="entry name" value="Methyl-accepting chemotaxis protein"/>
    <property type="match status" value="1"/>
</dbReference>
<dbReference type="InterPro" id="IPR004090">
    <property type="entry name" value="Chemotax_Me-accpt_rcpt"/>
</dbReference>
<dbReference type="InterPro" id="IPR003660">
    <property type="entry name" value="HAMP_dom"/>
</dbReference>
<dbReference type="InterPro" id="IPR004089">
    <property type="entry name" value="MCPsignal_dom"/>
</dbReference>
<dbReference type="PANTHER" id="PTHR32089:SF112">
    <property type="entry name" value="LYSOZYME-LIKE PROTEIN-RELATED"/>
    <property type="match status" value="1"/>
</dbReference>
<dbReference type="PANTHER" id="PTHR32089">
    <property type="entry name" value="METHYL-ACCEPTING CHEMOTAXIS PROTEIN MCPB"/>
    <property type="match status" value="1"/>
</dbReference>
<dbReference type="Pfam" id="PF00672">
    <property type="entry name" value="HAMP"/>
    <property type="match status" value="2"/>
</dbReference>
<dbReference type="Pfam" id="PF00015">
    <property type="entry name" value="MCPsignal"/>
    <property type="match status" value="1"/>
</dbReference>
<dbReference type="PRINTS" id="PR00260">
    <property type="entry name" value="CHEMTRNSDUCR"/>
</dbReference>
<dbReference type="SMART" id="SM00304">
    <property type="entry name" value="HAMP"/>
    <property type="match status" value="2"/>
</dbReference>
<dbReference type="SMART" id="SM00283">
    <property type="entry name" value="MA"/>
    <property type="match status" value="1"/>
</dbReference>
<dbReference type="SUPFAM" id="SSF158472">
    <property type="entry name" value="HAMP domain-like"/>
    <property type="match status" value="1"/>
</dbReference>
<dbReference type="SUPFAM" id="SSF58104">
    <property type="entry name" value="Methyl-accepting chemotaxis protein (MCP) signaling domain"/>
    <property type="match status" value="1"/>
</dbReference>
<dbReference type="PROSITE" id="PS50111">
    <property type="entry name" value="CHEMOTAXIS_TRANSDUC_2"/>
    <property type="match status" value="1"/>
</dbReference>
<dbReference type="PROSITE" id="PS50885">
    <property type="entry name" value="HAMP"/>
    <property type="match status" value="2"/>
</dbReference>